<comment type="function">
    <text>Endo-1,4-beta-xylanase involved in the hydrolysis of xylan, a major structural heterogeneous polysaccharide found in plant biomass representing the second most abundant polysaccharide in the biosphere, after cellulose.</text>
</comment>
<comment type="catalytic activity">
    <reaction>
        <text>Endohydrolysis of (1-&gt;4)-beta-D-xylosidic linkages in xylans.</text>
        <dbReference type="EC" id="3.2.1.8"/>
    </reaction>
</comment>
<comment type="biophysicochemical properties">
    <phDependence>
        <text>Optimum pH is 3.0.</text>
    </phDependence>
</comment>
<comment type="pathway">
    <text>Glycan degradation; xylan degradation.</text>
</comment>
<comment type="subcellular location">
    <subcellularLocation>
        <location evidence="1">Secreted</location>
    </subcellularLocation>
</comment>
<comment type="similarity">
    <text evidence="3">Belongs to the glycosyl hydrolase 11 (cellulase G) family.</text>
</comment>
<sequence length="211" mass="22642">MKVTAAFAGLLVTAFAAPVPEPVLVSRSAGINYVQNYNGNLGDFTYDESAGTFSMYWEDGVSSDFVVGLGWTTGSSKAITYSAEYSASGSSSYLAVYGWVNYPQAEYYIVEDYGDYNPCSSATSLGTVYSDGSTYQVCTDTRTNEPSITGTSTFTQYFSVRESTRTSGTVTVANHFNFWAQHGFGNSDFNYQVMAVEAWSGAGSASVTISS</sequence>
<feature type="signal peptide">
    <location>
        <begin position="1"/>
        <end position="27"/>
    </location>
</feature>
<feature type="chain" id="PRO_0000007992" description="Endo-1,4-beta-xylanase A">
    <location>
        <begin position="28"/>
        <end position="211"/>
    </location>
</feature>
<feature type="domain" description="GH11" evidence="2">
    <location>
        <begin position="28"/>
        <end position="210"/>
    </location>
</feature>
<feature type="active site" description="Nucleophile">
    <location>
        <position position="106"/>
    </location>
</feature>
<feature type="active site" description="Proton donor">
    <location>
        <position position="197"/>
    </location>
</feature>
<feature type="disulfide bond">
    <location>
        <begin position="119"/>
        <end position="138"/>
    </location>
</feature>
<feature type="strand" evidence="4">
    <location>
        <begin position="33"/>
        <end position="38"/>
    </location>
</feature>
<feature type="helix" evidence="4">
    <location>
        <begin position="39"/>
        <end position="41"/>
    </location>
</feature>
<feature type="strand" evidence="4">
    <location>
        <begin position="42"/>
        <end position="47"/>
    </location>
</feature>
<feature type="turn" evidence="4">
    <location>
        <begin position="48"/>
        <end position="51"/>
    </location>
</feature>
<feature type="strand" evidence="4">
    <location>
        <begin position="52"/>
        <end position="56"/>
    </location>
</feature>
<feature type="strand" evidence="4">
    <location>
        <begin position="61"/>
        <end position="63"/>
    </location>
</feature>
<feature type="strand" evidence="4">
    <location>
        <begin position="65"/>
        <end position="73"/>
    </location>
</feature>
<feature type="strand" evidence="4">
    <location>
        <begin position="79"/>
        <end position="86"/>
    </location>
</feature>
<feature type="strand" evidence="4">
    <location>
        <begin position="90"/>
        <end position="100"/>
    </location>
</feature>
<feature type="turn" evidence="4">
    <location>
        <begin position="101"/>
        <end position="104"/>
    </location>
</feature>
<feature type="strand" evidence="4">
    <location>
        <begin position="105"/>
        <end position="115"/>
    </location>
</feature>
<feature type="helix" evidence="4">
    <location>
        <begin position="118"/>
        <end position="120"/>
    </location>
</feature>
<feature type="strand" evidence="4">
    <location>
        <begin position="122"/>
        <end position="130"/>
    </location>
</feature>
<feature type="strand" evidence="4">
    <location>
        <begin position="133"/>
        <end position="147"/>
    </location>
</feature>
<feature type="strand" evidence="4">
    <location>
        <begin position="150"/>
        <end position="163"/>
    </location>
</feature>
<feature type="strand" evidence="4">
    <location>
        <begin position="166"/>
        <end position="170"/>
    </location>
</feature>
<feature type="helix" evidence="4">
    <location>
        <begin position="172"/>
        <end position="180"/>
    </location>
</feature>
<feature type="turn" evidence="4">
    <location>
        <begin position="181"/>
        <end position="183"/>
    </location>
</feature>
<feature type="strand" evidence="4">
    <location>
        <begin position="187"/>
        <end position="201"/>
    </location>
</feature>
<feature type="strand" evidence="4">
    <location>
        <begin position="204"/>
        <end position="209"/>
    </location>
</feature>
<protein>
    <recommendedName>
        <fullName>Endo-1,4-beta-xylanase A</fullName>
        <shortName>Xylanase A</shortName>
        <ecNumber>3.2.1.8</ecNumber>
    </recommendedName>
    <alternativeName>
        <fullName>1,4-beta-D-xylan xylanohydrolase A</fullName>
    </alternativeName>
    <alternativeName>
        <fullName>Endo-1,4-beta-xylanase I</fullName>
        <shortName>Xylanase I</shortName>
    </alternativeName>
</protein>
<accession>P55329</accession>
<name>XYNA_ASPNG</name>
<dbReference type="EC" id="3.2.1.8"/>
<dbReference type="EMBL" id="A19535">
    <property type="protein sequence ID" value="CAA01470.1"/>
    <property type="molecule type" value="Unassigned_DNA"/>
</dbReference>
<dbReference type="PDB" id="1T6G">
    <property type="method" value="X-ray"/>
    <property type="resolution" value="1.80 A"/>
    <property type="chains" value="C/D=28-211"/>
</dbReference>
<dbReference type="PDB" id="1UKR">
    <property type="method" value="X-ray"/>
    <property type="resolution" value="2.40 A"/>
    <property type="chains" value="A/B/C/D=28-211"/>
</dbReference>
<dbReference type="PDB" id="2QZ2">
    <property type="method" value="X-ray"/>
    <property type="resolution" value="2.80 A"/>
    <property type="chains" value="A=28-211"/>
</dbReference>
<dbReference type="PDB" id="6QE8">
    <property type="method" value="X-ray"/>
    <property type="resolution" value="1.79 A"/>
    <property type="chains" value="A=1-211"/>
</dbReference>
<dbReference type="PDBsum" id="1T6G"/>
<dbReference type="PDBsum" id="1UKR"/>
<dbReference type="PDBsum" id="2QZ2"/>
<dbReference type="PDBsum" id="6QE8"/>
<dbReference type="SMR" id="P55329"/>
<dbReference type="Allergome" id="980">
    <property type="allergen name" value="Asp n Hemicellulase"/>
</dbReference>
<dbReference type="CAZy" id="GH11">
    <property type="family name" value="Glycoside Hydrolase Family 11"/>
</dbReference>
<dbReference type="VEuPathDB" id="FungiDB:An14g07390"/>
<dbReference type="VEuPathDB" id="FungiDB:ASPNIDRAFT2_1101058"/>
<dbReference type="VEuPathDB" id="FungiDB:ATCC64974_22790"/>
<dbReference type="VEuPathDB" id="FungiDB:M747DRAFT_300402"/>
<dbReference type="BRENDA" id="3.2.1.8">
    <property type="organism ID" value="518"/>
</dbReference>
<dbReference type="UniPathway" id="UPA00114"/>
<dbReference type="EvolutionaryTrace" id="P55329"/>
<dbReference type="GO" id="GO:0005576">
    <property type="term" value="C:extracellular region"/>
    <property type="evidence" value="ECO:0007669"/>
    <property type="project" value="UniProtKB-SubCell"/>
</dbReference>
<dbReference type="GO" id="GO:0031176">
    <property type="term" value="F:endo-1,4-beta-xylanase activity"/>
    <property type="evidence" value="ECO:0007669"/>
    <property type="project" value="UniProtKB-EC"/>
</dbReference>
<dbReference type="GO" id="GO:0045493">
    <property type="term" value="P:xylan catabolic process"/>
    <property type="evidence" value="ECO:0007669"/>
    <property type="project" value="UniProtKB-UniPathway"/>
</dbReference>
<dbReference type="FunFam" id="2.60.120.180:FF:000002">
    <property type="entry name" value="Endo-1,4-beta-xylanase A"/>
    <property type="match status" value="1"/>
</dbReference>
<dbReference type="Gene3D" id="2.60.120.180">
    <property type="match status" value="1"/>
</dbReference>
<dbReference type="InterPro" id="IPR013320">
    <property type="entry name" value="ConA-like_dom_sf"/>
</dbReference>
<dbReference type="InterPro" id="IPR013319">
    <property type="entry name" value="GH11/12"/>
</dbReference>
<dbReference type="InterPro" id="IPR018208">
    <property type="entry name" value="GH11_AS_1"/>
</dbReference>
<dbReference type="InterPro" id="IPR033119">
    <property type="entry name" value="GH11_AS_2"/>
</dbReference>
<dbReference type="InterPro" id="IPR033123">
    <property type="entry name" value="GH11_dom"/>
</dbReference>
<dbReference type="InterPro" id="IPR001137">
    <property type="entry name" value="Glyco_hydro_11"/>
</dbReference>
<dbReference type="PANTHER" id="PTHR46828">
    <property type="entry name" value="ENDO-1,4-BETA-XYLANASE A-RELATED"/>
    <property type="match status" value="1"/>
</dbReference>
<dbReference type="PANTHER" id="PTHR46828:SF2">
    <property type="entry name" value="ENDO-1,4-BETA-XYLANASE A-RELATED"/>
    <property type="match status" value="1"/>
</dbReference>
<dbReference type="Pfam" id="PF00457">
    <property type="entry name" value="Glyco_hydro_11"/>
    <property type="match status" value="1"/>
</dbReference>
<dbReference type="PRINTS" id="PR00911">
    <property type="entry name" value="GLHYDRLASE11"/>
</dbReference>
<dbReference type="SUPFAM" id="SSF49899">
    <property type="entry name" value="Concanavalin A-like lectins/glucanases"/>
    <property type="match status" value="1"/>
</dbReference>
<dbReference type="PROSITE" id="PS00776">
    <property type="entry name" value="GH11_1"/>
    <property type="match status" value="1"/>
</dbReference>
<dbReference type="PROSITE" id="PS00777">
    <property type="entry name" value="GH11_2"/>
    <property type="match status" value="1"/>
</dbReference>
<dbReference type="PROSITE" id="PS51761">
    <property type="entry name" value="GH11_3"/>
    <property type="match status" value="1"/>
</dbReference>
<reference key="1">
    <citation type="patent" date="1991-12-26" number="WO9119782">
        <title>Xylanase production.</title>
        <authorList>
            <person name="Hessing J.G.M."/>
            <person name="van Gorcom R.F.M."/>
            <person name="Verbakel J.M.A."/>
            <person name="Roza M."/>
            <person name="Maat J."/>
        </authorList>
    </citation>
    <scope>NUCLEOTIDE SEQUENCE [GENOMIC DNA]</scope>
</reference>
<reference key="2">
    <citation type="journal article" date="1996" name="J. Mol. Biol.">
        <title>Three-dimensional structure of Endo-1,4-beta-xylanase I from Aspergillus niger: molecular basis for its low pH optimum.</title>
        <authorList>
            <person name="Krengel U."/>
            <person name="Dijkstra B.W."/>
        </authorList>
    </citation>
    <scope>X-RAY CRYSTALLOGRAPHY (2.4 ANGSTROMS)</scope>
</reference>
<gene>
    <name type="primary">xynA</name>
</gene>
<keyword id="KW-0002">3D-structure</keyword>
<keyword id="KW-0119">Carbohydrate metabolism</keyword>
<keyword id="KW-1015">Disulfide bond</keyword>
<keyword id="KW-0326">Glycosidase</keyword>
<keyword id="KW-0378">Hydrolase</keyword>
<keyword id="KW-0624">Polysaccharide degradation</keyword>
<keyword id="KW-0964">Secreted</keyword>
<keyword id="KW-0732">Signal</keyword>
<keyword id="KW-0858">Xylan degradation</keyword>
<evidence type="ECO:0000250" key="1"/>
<evidence type="ECO:0000255" key="2">
    <source>
        <dbReference type="PROSITE-ProRule" id="PRU01097"/>
    </source>
</evidence>
<evidence type="ECO:0000305" key="3"/>
<evidence type="ECO:0007829" key="4">
    <source>
        <dbReference type="PDB" id="6QE8"/>
    </source>
</evidence>
<organism>
    <name type="scientific">Aspergillus niger</name>
    <dbReference type="NCBI Taxonomy" id="5061"/>
    <lineage>
        <taxon>Eukaryota</taxon>
        <taxon>Fungi</taxon>
        <taxon>Dikarya</taxon>
        <taxon>Ascomycota</taxon>
        <taxon>Pezizomycotina</taxon>
        <taxon>Eurotiomycetes</taxon>
        <taxon>Eurotiomycetidae</taxon>
        <taxon>Eurotiales</taxon>
        <taxon>Aspergillaceae</taxon>
        <taxon>Aspergillus</taxon>
        <taxon>Aspergillus subgen. Circumdati</taxon>
    </lineage>
</organism>
<proteinExistence type="evidence at protein level"/>